<comment type="subcellular location">
    <subcellularLocation>
        <location evidence="2">Cell membrane</location>
        <topology evidence="2">Multi-pass membrane protein</topology>
    </subcellularLocation>
</comment>
<organism>
    <name type="scientific">Aquifex aeolicus (strain VF5)</name>
    <dbReference type="NCBI Taxonomy" id="224324"/>
    <lineage>
        <taxon>Bacteria</taxon>
        <taxon>Pseudomonadati</taxon>
        <taxon>Aquificota</taxon>
        <taxon>Aquificia</taxon>
        <taxon>Aquificales</taxon>
        <taxon>Aquificaceae</taxon>
        <taxon>Aquifex</taxon>
    </lineage>
</organism>
<reference key="1">
    <citation type="journal article" date="1998" name="Nature">
        <title>The complete genome of the hyperthermophilic bacterium Aquifex aeolicus.</title>
        <authorList>
            <person name="Deckert G."/>
            <person name="Warren P.V."/>
            <person name="Gaasterland T."/>
            <person name="Young W.G."/>
            <person name="Lenox A.L."/>
            <person name="Graham D.E."/>
            <person name="Overbeek R."/>
            <person name="Snead M.A."/>
            <person name="Keller M."/>
            <person name="Aujay M."/>
            <person name="Huber R."/>
            <person name="Feldman R.A."/>
            <person name="Short J.M."/>
            <person name="Olsen G.J."/>
            <person name="Swanson R.V."/>
        </authorList>
    </citation>
    <scope>NUCLEOTIDE SEQUENCE [LARGE SCALE GENOMIC DNA]</scope>
    <source>
        <strain>VF5</strain>
    </source>
</reference>
<proteinExistence type="predicted"/>
<dbReference type="EMBL" id="AE000657">
    <property type="protein sequence ID" value="AAC06924.1"/>
    <property type="molecule type" value="Genomic_DNA"/>
</dbReference>
<dbReference type="PIR" id="D70366">
    <property type="entry name" value="D70366"/>
</dbReference>
<dbReference type="RefSeq" id="NP_213520.1">
    <property type="nucleotide sequence ID" value="NC_000918.1"/>
</dbReference>
<dbReference type="RefSeq" id="WP_010880458.1">
    <property type="nucleotide sequence ID" value="NC_000918.1"/>
</dbReference>
<dbReference type="STRING" id="224324.aq_757"/>
<dbReference type="EnsemblBacteria" id="AAC06924">
    <property type="protein sequence ID" value="AAC06924"/>
    <property type="gene ID" value="aq_757"/>
</dbReference>
<dbReference type="KEGG" id="aae:aq_757"/>
<dbReference type="eggNOG" id="ENOG50330A0">
    <property type="taxonomic scope" value="Bacteria"/>
</dbReference>
<dbReference type="HOGENOM" id="CLU_1500560_0_0_0"/>
<dbReference type="InParanoid" id="O66959"/>
<dbReference type="OrthoDB" id="13039at2"/>
<dbReference type="Proteomes" id="UP000000798">
    <property type="component" value="Chromosome"/>
</dbReference>
<dbReference type="GO" id="GO:0005886">
    <property type="term" value="C:plasma membrane"/>
    <property type="evidence" value="ECO:0007669"/>
    <property type="project" value="UniProtKB-SubCell"/>
</dbReference>
<feature type="chain" id="PRO_0000186878" description="Uncharacterized protein aq_757">
    <location>
        <begin position="1"/>
        <end position="179"/>
    </location>
</feature>
<feature type="transmembrane region" description="Helical" evidence="1">
    <location>
        <begin position="9"/>
        <end position="31"/>
    </location>
</feature>
<feature type="transmembrane region" description="Helical" evidence="1">
    <location>
        <begin position="41"/>
        <end position="63"/>
    </location>
</feature>
<feature type="transmembrane region" description="Helical" evidence="1">
    <location>
        <begin position="114"/>
        <end position="136"/>
    </location>
</feature>
<feature type="transmembrane region" description="Helical" evidence="1">
    <location>
        <begin position="146"/>
        <end position="168"/>
    </location>
</feature>
<sequence length="179" mass="20002">MKAESVSQWILVILFATLLFFAFTGIFVSTLLVVLTPEGFAFLLGFLGALVFANKLLFGYGSFVITAEAFLTNKEIDRRELAKKTNEPVERTENLSIPALLALWLAGLDYYRYAYYGIFTLMLIIMLLSKFDLLGALTIGNYFEGAFWGAAVITLFVFALEITANYLMARINEEVSLNG</sequence>
<gene>
    <name type="ordered locus">aq_757</name>
</gene>
<accession>O66959</accession>
<name>Y757_AQUAE</name>
<evidence type="ECO:0000255" key="1"/>
<evidence type="ECO:0000305" key="2"/>
<protein>
    <recommendedName>
        <fullName>Uncharacterized protein aq_757</fullName>
    </recommendedName>
</protein>
<keyword id="KW-1003">Cell membrane</keyword>
<keyword id="KW-0472">Membrane</keyword>
<keyword id="KW-1185">Reference proteome</keyword>
<keyword id="KW-0812">Transmembrane</keyword>
<keyword id="KW-1133">Transmembrane helix</keyword>